<comment type="function">
    <text evidence="1">Involved in the biosynthesis of isoprenoids. Catalyzes the 1,3-allylic rearrangement of the homoallylic substrate isopentenyl (IPP) to its allylic isomer, dimethylallyl diphosphate (DMAPP).</text>
</comment>
<comment type="catalytic activity">
    <reaction evidence="1">
        <text>isopentenyl diphosphate = dimethylallyl diphosphate</text>
        <dbReference type="Rhea" id="RHEA:23284"/>
        <dbReference type="ChEBI" id="CHEBI:57623"/>
        <dbReference type="ChEBI" id="CHEBI:128769"/>
        <dbReference type="EC" id="5.3.3.2"/>
    </reaction>
</comment>
<comment type="cofactor">
    <cofactor evidence="1">
        <name>FMN</name>
        <dbReference type="ChEBI" id="CHEBI:58210"/>
    </cofactor>
</comment>
<comment type="cofactor">
    <cofactor evidence="1">
        <name>NADPH</name>
        <dbReference type="ChEBI" id="CHEBI:57783"/>
    </cofactor>
</comment>
<comment type="cofactor">
    <cofactor evidence="1">
        <name>Mg(2+)</name>
        <dbReference type="ChEBI" id="CHEBI:18420"/>
    </cofactor>
</comment>
<comment type="subunit">
    <text evidence="1">Homooctamer. Dimer of tetramers.</text>
</comment>
<comment type="subcellular location">
    <subcellularLocation>
        <location evidence="1">Cytoplasm</location>
    </subcellularLocation>
</comment>
<comment type="similarity">
    <text evidence="1">Belongs to the IPP isomerase type 2 family.</text>
</comment>
<reference key="1">
    <citation type="submission" date="2007-04" db="EMBL/GenBank/DDBJ databases">
        <title>Complete sequence of Pyrobaculum arsenaticum DSM 13514.</title>
        <authorList>
            <consortium name="US DOE Joint Genome Institute"/>
            <person name="Copeland A."/>
            <person name="Lucas S."/>
            <person name="Lapidus A."/>
            <person name="Barry K."/>
            <person name="Glavina del Rio T."/>
            <person name="Dalin E."/>
            <person name="Tice H."/>
            <person name="Pitluck S."/>
            <person name="Chain P."/>
            <person name="Malfatti S."/>
            <person name="Shin M."/>
            <person name="Vergez L."/>
            <person name="Schmutz J."/>
            <person name="Larimer F."/>
            <person name="Land M."/>
            <person name="Hauser L."/>
            <person name="Kyrpides N."/>
            <person name="Mikhailova N."/>
            <person name="Cozen A.E."/>
            <person name="Fitz-Gibbon S.T."/>
            <person name="House C.H."/>
            <person name="Saltikov C."/>
            <person name="Lowe T.M."/>
            <person name="Richardson P."/>
        </authorList>
    </citation>
    <scope>NUCLEOTIDE SEQUENCE [LARGE SCALE GENOMIC DNA]</scope>
    <source>
        <strain>ATCC 700994 / DSM 13514 / JCM 11321 / PZ6</strain>
    </source>
</reference>
<sequence>MGIDKRKNDHIYLASSDLSQVGTALFEEVVLIHNALPEIDFSDIDLSTNFLGAPVKAPFGIGAMTGGTELAGKINAELAKAAEEFGIPMYVGSQRIALVKPEVRWTFEVVKQNAPSIPKIANLGAPQLAQLSEKQLVDWVVQAVDMIDAYAVAVHLNAAQEVVQPEGEPSFRGVLEKLKIVKRAAGRPLIVKEVGNGISKEVAAKLAEVADAIDVGGLGGTSFVAIEGARAADAWLQRRVAETFKYWGIPTAASICEVKSVYRGFVIASGGIRSGLDGARALALGAHFFTMSQPLLKATLEGRLREEIEAVITEVKIAMFLTGVRRPQELAQVPRVYGPRLRAWLEQRGTTC</sequence>
<protein>
    <recommendedName>
        <fullName evidence="1">Isopentenyl-diphosphate delta-isomerase</fullName>
        <shortName evidence="1">IPP isomerase</shortName>
        <ecNumber evidence="1">5.3.3.2</ecNumber>
    </recommendedName>
    <alternativeName>
        <fullName evidence="1">Isopentenyl diphosphate:dimethylallyl diphosphate isomerase</fullName>
    </alternativeName>
    <alternativeName>
        <fullName evidence="1">Isopentenyl pyrophosphate isomerase</fullName>
    </alternativeName>
    <alternativeName>
        <fullName evidence="1">Type 2 isopentenyl diphosphate isomerase</fullName>
        <shortName evidence="1">IDI-2</shortName>
    </alternativeName>
</protein>
<gene>
    <name evidence="1" type="primary">fni</name>
    <name type="ordered locus">Pars_0051</name>
</gene>
<name>IDI2_PYRAR</name>
<proteinExistence type="inferred from homology"/>
<dbReference type="EC" id="5.3.3.2" evidence="1"/>
<dbReference type="EMBL" id="CP000660">
    <property type="protein sequence ID" value="ABP49668.1"/>
    <property type="molecule type" value="Genomic_DNA"/>
</dbReference>
<dbReference type="SMR" id="A4WH01"/>
<dbReference type="STRING" id="340102.Pars_0051"/>
<dbReference type="KEGG" id="pas:Pars_0051"/>
<dbReference type="HOGENOM" id="CLU_065515_1_0_2"/>
<dbReference type="OrthoDB" id="371955at2157"/>
<dbReference type="PhylomeDB" id="A4WH01"/>
<dbReference type="Proteomes" id="UP000001567">
    <property type="component" value="Chromosome"/>
</dbReference>
<dbReference type="GO" id="GO:0005737">
    <property type="term" value="C:cytoplasm"/>
    <property type="evidence" value="ECO:0007669"/>
    <property type="project" value="UniProtKB-SubCell"/>
</dbReference>
<dbReference type="GO" id="GO:0010181">
    <property type="term" value="F:FMN binding"/>
    <property type="evidence" value="ECO:0007669"/>
    <property type="project" value="UniProtKB-UniRule"/>
</dbReference>
<dbReference type="GO" id="GO:0004452">
    <property type="term" value="F:isopentenyl-diphosphate delta-isomerase activity"/>
    <property type="evidence" value="ECO:0007669"/>
    <property type="project" value="UniProtKB-UniRule"/>
</dbReference>
<dbReference type="GO" id="GO:0000287">
    <property type="term" value="F:magnesium ion binding"/>
    <property type="evidence" value="ECO:0007669"/>
    <property type="project" value="UniProtKB-UniRule"/>
</dbReference>
<dbReference type="GO" id="GO:0070402">
    <property type="term" value="F:NADPH binding"/>
    <property type="evidence" value="ECO:0007669"/>
    <property type="project" value="UniProtKB-UniRule"/>
</dbReference>
<dbReference type="GO" id="GO:0016491">
    <property type="term" value="F:oxidoreductase activity"/>
    <property type="evidence" value="ECO:0007669"/>
    <property type="project" value="InterPro"/>
</dbReference>
<dbReference type="GO" id="GO:0008299">
    <property type="term" value="P:isoprenoid biosynthetic process"/>
    <property type="evidence" value="ECO:0007669"/>
    <property type="project" value="UniProtKB-UniRule"/>
</dbReference>
<dbReference type="CDD" id="cd02811">
    <property type="entry name" value="IDI-2_FMN"/>
    <property type="match status" value="1"/>
</dbReference>
<dbReference type="Gene3D" id="3.20.20.70">
    <property type="entry name" value="Aldolase class I"/>
    <property type="match status" value="1"/>
</dbReference>
<dbReference type="HAMAP" id="MF_00354">
    <property type="entry name" value="Idi_2"/>
    <property type="match status" value="1"/>
</dbReference>
<dbReference type="InterPro" id="IPR013785">
    <property type="entry name" value="Aldolase_TIM"/>
</dbReference>
<dbReference type="InterPro" id="IPR000262">
    <property type="entry name" value="FMN-dep_DH"/>
</dbReference>
<dbReference type="InterPro" id="IPR011179">
    <property type="entry name" value="IPdP_isomerase"/>
</dbReference>
<dbReference type="NCBIfam" id="TIGR02151">
    <property type="entry name" value="IPP_isom_2"/>
    <property type="match status" value="1"/>
</dbReference>
<dbReference type="PANTHER" id="PTHR43665">
    <property type="entry name" value="ISOPENTENYL-DIPHOSPHATE DELTA-ISOMERASE"/>
    <property type="match status" value="1"/>
</dbReference>
<dbReference type="PANTHER" id="PTHR43665:SF1">
    <property type="entry name" value="ISOPENTENYL-DIPHOSPHATE DELTA-ISOMERASE"/>
    <property type="match status" value="1"/>
</dbReference>
<dbReference type="Pfam" id="PF01070">
    <property type="entry name" value="FMN_dh"/>
    <property type="match status" value="2"/>
</dbReference>
<dbReference type="PIRSF" id="PIRSF003314">
    <property type="entry name" value="IPP_isomerase"/>
    <property type="match status" value="1"/>
</dbReference>
<dbReference type="SUPFAM" id="SSF51395">
    <property type="entry name" value="FMN-linked oxidoreductases"/>
    <property type="match status" value="1"/>
</dbReference>
<feature type="chain" id="PRO_1000048451" description="Isopentenyl-diphosphate delta-isomerase">
    <location>
        <begin position="1"/>
        <end position="352"/>
    </location>
</feature>
<feature type="binding site" evidence="1">
    <location>
        <begin position="6"/>
        <end position="7"/>
    </location>
    <ligand>
        <name>substrate</name>
    </ligand>
</feature>
<feature type="binding site" evidence="1">
    <location>
        <begin position="63"/>
        <end position="65"/>
    </location>
    <ligand>
        <name>FMN</name>
        <dbReference type="ChEBI" id="CHEBI:58210"/>
    </ligand>
</feature>
<feature type="binding site" evidence="1">
    <location>
        <begin position="93"/>
        <end position="95"/>
    </location>
    <ligand>
        <name>substrate</name>
    </ligand>
</feature>
<feature type="binding site" evidence="1">
    <location>
        <position position="93"/>
    </location>
    <ligand>
        <name>FMN</name>
        <dbReference type="ChEBI" id="CHEBI:58210"/>
    </ligand>
</feature>
<feature type="binding site" evidence="1">
    <location>
        <position position="122"/>
    </location>
    <ligand>
        <name>FMN</name>
        <dbReference type="ChEBI" id="CHEBI:58210"/>
    </ligand>
</feature>
<feature type="binding site" evidence="1">
    <location>
        <position position="160"/>
    </location>
    <ligand>
        <name>substrate</name>
    </ligand>
</feature>
<feature type="binding site" evidence="1">
    <location>
        <position position="161"/>
    </location>
    <ligand>
        <name>Mg(2+)</name>
        <dbReference type="ChEBI" id="CHEBI:18420"/>
    </ligand>
</feature>
<feature type="binding site" evidence="1">
    <location>
        <position position="192"/>
    </location>
    <ligand>
        <name>FMN</name>
        <dbReference type="ChEBI" id="CHEBI:58210"/>
    </ligand>
</feature>
<feature type="binding site" evidence="1">
    <location>
        <position position="221"/>
    </location>
    <ligand>
        <name>FMN</name>
        <dbReference type="ChEBI" id="CHEBI:58210"/>
    </ligand>
</feature>
<feature type="binding site" evidence="1">
    <location>
        <begin position="271"/>
        <end position="273"/>
    </location>
    <ligand>
        <name>FMN</name>
        <dbReference type="ChEBI" id="CHEBI:58210"/>
    </ligand>
</feature>
<feature type="binding site" evidence="1">
    <location>
        <begin position="292"/>
        <end position="293"/>
    </location>
    <ligand>
        <name>FMN</name>
        <dbReference type="ChEBI" id="CHEBI:58210"/>
    </ligand>
</feature>
<evidence type="ECO:0000255" key="1">
    <source>
        <dbReference type="HAMAP-Rule" id="MF_00354"/>
    </source>
</evidence>
<accession>A4WH01</accession>
<keyword id="KW-0963">Cytoplasm</keyword>
<keyword id="KW-0285">Flavoprotein</keyword>
<keyword id="KW-0288">FMN</keyword>
<keyword id="KW-0413">Isomerase</keyword>
<keyword id="KW-0414">Isoprene biosynthesis</keyword>
<keyword id="KW-0460">Magnesium</keyword>
<keyword id="KW-0479">Metal-binding</keyword>
<keyword id="KW-0521">NADP</keyword>
<organism>
    <name type="scientific">Pyrobaculum arsenaticum (strain DSM 13514 / JCM 11321 / PZ6)</name>
    <dbReference type="NCBI Taxonomy" id="340102"/>
    <lineage>
        <taxon>Archaea</taxon>
        <taxon>Thermoproteota</taxon>
        <taxon>Thermoprotei</taxon>
        <taxon>Thermoproteales</taxon>
        <taxon>Thermoproteaceae</taxon>
        <taxon>Pyrobaculum</taxon>
    </lineage>
</organism>